<proteinExistence type="evidence at protein level"/>
<name>NDUF3_DROME</name>
<keyword id="KW-0496">Mitochondrion</keyword>
<keyword id="KW-1185">Reference proteome</keyword>
<keyword id="KW-0809">Transit peptide</keyword>
<evidence type="ECO:0000255" key="1"/>
<evidence type="ECO:0000269" key="2">
    <source>
    </source>
</evidence>
<evidence type="ECO:0000303" key="3">
    <source>
    </source>
</evidence>
<evidence type="ECO:0000305" key="4"/>
<evidence type="ECO:0000312" key="5">
    <source>
        <dbReference type="EMBL" id="AAM51095.1"/>
    </source>
</evidence>
<evidence type="ECO:0000312" key="6">
    <source>
        <dbReference type="FlyBase" id="FBgn0034919"/>
    </source>
</evidence>
<evidence type="ECO:0000312" key="7">
    <source>
        <dbReference type="Proteomes" id="UP000000803"/>
    </source>
</evidence>
<protein>
    <recommendedName>
        <fullName evidence="4">NADH dehydrogenase [ubiquinone] 1 alpha subcomplex assembly factor 3</fullName>
        <shortName evidence="3">dNDUFAF3</shortName>
    </recommendedName>
    <alternativeName>
        <fullName evidence="6">NADH:ubiquinone oxidoreductase complex assembly factor 3</fullName>
    </alternativeName>
</protein>
<reference evidence="7" key="1">
    <citation type="journal article" date="2000" name="Science">
        <title>The genome sequence of Drosophila melanogaster.</title>
        <authorList>
            <person name="Adams M.D."/>
            <person name="Celniker S.E."/>
            <person name="Holt R.A."/>
            <person name="Evans C.A."/>
            <person name="Gocayne J.D."/>
            <person name="Amanatides P.G."/>
            <person name="Scherer S.E."/>
            <person name="Li P.W."/>
            <person name="Hoskins R.A."/>
            <person name="Galle R.F."/>
            <person name="George R.A."/>
            <person name="Lewis S.E."/>
            <person name="Richards S."/>
            <person name="Ashburner M."/>
            <person name="Henderson S.N."/>
            <person name="Sutton G.G."/>
            <person name="Wortman J.R."/>
            <person name="Yandell M.D."/>
            <person name="Zhang Q."/>
            <person name="Chen L.X."/>
            <person name="Brandon R.C."/>
            <person name="Rogers Y.-H.C."/>
            <person name="Blazej R.G."/>
            <person name="Champe M."/>
            <person name="Pfeiffer B.D."/>
            <person name="Wan K.H."/>
            <person name="Doyle C."/>
            <person name="Baxter E.G."/>
            <person name="Helt G."/>
            <person name="Nelson C.R."/>
            <person name="Miklos G.L.G."/>
            <person name="Abril J.F."/>
            <person name="Agbayani A."/>
            <person name="An H.-J."/>
            <person name="Andrews-Pfannkoch C."/>
            <person name="Baldwin D."/>
            <person name="Ballew R.M."/>
            <person name="Basu A."/>
            <person name="Baxendale J."/>
            <person name="Bayraktaroglu L."/>
            <person name="Beasley E.M."/>
            <person name="Beeson K.Y."/>
            <person name="Benos P.V."/>
            <person name="Berman B.P."/>
            <person name="Bhandari D."/>
            <person name="Bolshakov S."/>
            <person name="Borkova D."/>
            <person name="Botchan M.R."/>
            <person name="Bouck J."/>
            <person name="Brokstein P."/>
            <person name="Brottier P."/>
            <person name="Burtis K.C."/>
            <person name="Busam D.A."/>
            <person name="Butler H."/>
            <person name="Cadieu E."/>
            <person name="Center A."/>
            <person name="Chandra I."/>
            <person name="Cherry J.M."/>
            <person name="Cawley S."/>
            <person name="Dahlke C."/>
            <person name="Davenport L.B."/>
            <person name="Davies P."/>
            <person name="de Pablos B."/>
            <person name="Delcher A."/>
            <person name="Deng Z."/>
            <person name="Mays A.D."/>
            <person name="Dew I."/>
            <person name="Dietz S.M."/>
            <person name="Dodson K."/>
            <person name="Doup L.E."/>
            <person name="Downes M."/>
            <person name="Dugan-Rocha S."/>
            <person name="Dunkov B.C."/>
            <person name="Dunn P."/>
            <person name="Durbin K.J."/>
            <person name="Evangelista C.C."/>
            <person name="Ferraz C."/>
            <person name="Ferriera S."/>
            <person name="Fleischmann W."/>
            <person name="Fosler C."/>
            <person name="Gabrielian A.E."/>
            <person name="Garg N.S."/>
            <person name="Gelbart W.M."/>
            <person name="Glasser K."/>
            <person name="Glodek A."/>
            <person name="Gong F."/>
            <person name="Gorrell J.H."/>
            <person name="Gu Z."/>
            <person name="Guan P."/>
            <person name="Harris M."/>
            <person name="Harris N.L."/>
            <person name="Harvey D.A."/>
            <person name="Heiman T.J."/>
            <person name="Hernandez J.R."/>
            <person name="Houck J."/>
            <person name="Hostin D."/>
            <person name="Houston K.A."/>
            <person name="Howland T.J."/>
            <person name="Wei M.-H."/>
            <person name="Ibegwam C."/>
            <person name="Jalali M."/>
            <person name="Kalush F."/>
            <person name="Karpen G.H."/>
            <person name="Ke Z."/>
            <person name="Kennison J.A."/>
            <person name="Ketchum K.A."/>
            <person name="Kimmel B.E."/>
            <person name="Kodira C.D."/>
            <person name="Kraft C.L."/>
            <person name="Kravitz S."/>
            <person name="Kulp D."/>
            <person name="Lai Z."/>
            <person name="Lasko P."/>
            <person name="Lei Y."/>
            <person name="Levitsky A.A."/>
            <person name="Li J.H."/>
            <person name="Li Z."/>
            <person name="Liang Y."/>
            <person name="Lin X."/>
            <person name="Liu X."/>
            <person name="Mattei B."/>
            <person name="McIntosh T.C."/>
            <person name="McLeod M.P."/>
            <person name="McPherson D."/>
            <person name="Merkulov G."/>
            <person name="Milshina N.V."/>
            <person name="Mobarry C."/>
            <person name="Morris J."/>
            <person name="Moshrefi A."/>
            <person name="Mount S.M."/>
            <person name="Moy M."/>
            <person name="Murphy B."/>
            <person name="Murphy L."/>
            <person name="Muzny D.M."/>
            <person name="Nelson D.L."/>
            <person name="Nelson D.R."/>
            <person name="Nelson K.A."/>
            <person name="Nixon K."/>
            <person name="Nusskern D.R."/>
            <person name="Pacleb J.M."/>
            <person name="Palazzolo M."/>
            <person name="Pittman G.S."/>
            <person name="Pan S."/>
            <person name="Pollard J."/>
            <person name="Puri V."/>
            <person name="Reese M.G."/>
            <person name="Reinert K."/>
            <person name="Remington K."/>
            <person name="Saunders R.D.C."/>
            <person name="Scheeler F."/>
            <person name="Shen H."/>
            <person name="Shue B.C."/>
            <person name="Siden-Kiamos I."/>
            <person name="Simpson M."/>
            <person name="Skupski M.P."/>
            <person name="Smith T.J."/>
            <person name="Spier E."/>
            <person name="Spradling A.C."/>
            <person name="Stapleton M."/>
            <person name="Strong R."/>
            <person name="Sun E."/>
            <person name="Svirskas R."/>
            <person name="Tector C."/>
            <person name="Turner R."/>
            <person name="Venter E."/>
            <person name="Wang A.H."/>
            <person name="Wang X."/>
            <person name="Wang Z.-Y."/>
            <person name="Wassarman D.A."/>
            <person name="Weinstock G.M."/>
            <person name="Weissenbach J."/>
            <person name="Williams S.M."/>
            <person name="Woodage T."/>
            <person name="Worley K.C."/>
            <person name="Wu D."/>
            <person name="Yang S."/>
            <person name="Yao Q.A."/>
            <person name="Ye J."/>
            <person name="Yeh R.-F."/>
            <person name="Zaveri J.S."/>
            <person name="Zhan M."/>
            <person name="Zhang G."/>
            <person name="Zhao Q."/>
            <person name="Zheng L."/>
            <person name="Zheng X.H."/>
            <person name="Zhong F.N."/>
            <person name="Zhong W."/>
            <person name="Zhou X."/>
            <person name="Zhu S.C."/>
            <person name="Zhu X."/>
            <person name="Smith H.O."/>
            <person name="Gibbs R.A."/>
            <person name="Myers E.W."/>
            <person name="Rubin G.M."/>
            <person name="Venter J.C."/>
        </authorList>
    </citation>
    <scope>NUCLEOTIDE SEQUENCE [LARGE SCALE GENOMIC DNA]</scope>
    <source>
        <strain evidence="7">Berkeley</strain>
    </source>
</reference>
<reference evidence="7" key="2">
    <citation type="journal article" date="2002" name="Genome Biol.">
        <title>Annotation of the Drosophila melanogaster euchromatic genome: a systematic review.</title>
        <authorList>
            <person name="Misra S."/>
            <person name="Crosby M.A."/>
            <person name="Mungall C.J."/>
            <person name="Matthews B.B."/>
            <person name="Campbell K.S."/>
            <person name="Hradecky P."/>
            <person name="Huang Y."/>
            <person name="Kaminker J.S."/>
            <person name="Millburn G.H."/>
            <person name="Prochnik S.E."/>
            <person name="Smith C.D."/>
            <person name="Tupy J.L."/>
            <person name="Whitfield E.J."/>
            <person name="Bayraktaroglu L."/>
            <person name="Berman B.P."/>
            <person name="Bettencourt B.R."/>
            <person name="Celniker S.E."/>
            <person name="de Grey A.D.N.J."/>
            <person name="Drysdale R.A."/>
            <person name="Harris N.L."/>
            <person name="Richter J."/>
            <person name="Russo S."/>
            <person name="Schroeder A.J."/>
            <person name="Shu S.Q."/>
            <person name="Stapleton M."/>
            <person name="Yamada C."/>
            <person name="Ashburner M."/>
            <person name="Gelbart W.M."/>
            <person name="Rubin G.M."/>
            <person name="Lewis S.E."/>
        </authorList>
    </citation>
    <scope>GENOME REANNOTATION</scope>
    <source>
        <strain evidence="7">Berkeley</strain>
    </source>
</reference>
<reference evidence="5" key="3">
    <citation type="journal article" date="2002" name="Genome Biol.">
        <title>A Drosophila full-length cDNA resource.</title>
        <authorList>
            <person name="Stapleton M."/>
            <person name="Carlson J.W."/>
            <person name="Brokstein P."/>
            <person name="Yu C."/>
            <person name="Champe M."/>
            <person name="George R.A."/>
            <person name="Guarin H."/>
            <person name="Kronmiller B."/>
            <person name="Pacleb J.M."/>
            <person name="Park S."/>
            <person name="Wan K.H."/>
            <person name="Rubin G.M."/>
            <person name="Celniker S.E."/>
        </authorList>
    </citation>
    <scope>NUCLEOTIDE SEQUENCE [LARGE SCALE MRNA]</scope>
    <source>
        <strain evidence="5">Berkeley</strain>
        <tissue evidence="5">Embryo</tissue>
    </source>
</reference>
<reference evidence="4" key="4">
    <citation type="journal article" date="2021" name="IScience">
        <title>Dissecting the concordant and disparate roles of NDUFAF3 and NDUFAF4 in mitochondrial complex I biogenesis.</title>
        <authorList>
            <person name="Murari A."/>
            <person name="Rhooms S.K."/>
            <person name="Garcia C."/>
            <person name="Liu T."/>
            <person name="Li H."/>
            <person name="Mishra B."/>
            <person name="Deshong C."/>
            <person name="Owusu-Ansah E."/>
        </authorList>
    </citation>
    <scope>FUNCTION</scope>
    <scope>INTERACTION WITH COMPLEX 1</scope>
    <scope>DISRUPTION PHENOTYPE</scope>
</reference>
<organism evidence="7">
    <name type="scientific">Drosophila melanogaster</name>
    <name type="common">Fruit fly</name>
    <dbReference type="NCBI Taxonomy" id="7227"/>
    <lineage>
        <taxon>Eukaryota</taxon>
        <taxon>Metazoa</taxon>
        <taxon>Ecdysozoa</taxon>
        <taxon>Arthropoda</taxon>
        <taxon>Hexapoda</taxon>
        <taxon>Insecta</taxon>
        <taxon>Pterygota</taxon>
        <taxon>Neoptera</taxon>
        <taxon>Endopterygota</taxon>
        <taxon>Diptera</taxon>
        <taxon>Brachycera</taxon>
        <taxon>Muscomorpha</taxon>
        <taxon>Ephydroidea</taxon>
        <taxon>Drosophilidae</taxon>
        <taxon>Drosophila</taxon>
        <taxon>Sophophora</taxon>
    </lineage>
</organism>
<dbReference type="EMBL" id="AE013599">
    <property type="protein sequence ID" value="AAF47082.1"/>
    <property type="molecule type" value="Genomic_DNA"/>
</dbReference>
<dbReference type="EMBL" id="AY119235">
    <property type="protein sequence ID" value="AAM51095.1"/>
    <property type="molecule type" value="mRNA"/>
</dbReference>
<dbReference type="RefSeq" id="NP_611840.1">
    <property type="nucleotide sequence ID" value="NM_137996.4"/>
</dbReference>
<dbReference type="SMR" id="Q9W1H9"/>
<dbReference type="FunCoup" id="Q9W1H9">
    <property type="interactions" value="876"/>
</dbReference>
<dbReference type="IntAct" id="Q9W1H9">
    <property type="interactions" value="2"/>
</dbReference>
<dbReference type="STRING" id="7227.FBpp0072037"/>
<dbReference type="PaxDb" id="7227-FBpp0072037"/>
<dbReference type="DNASU" id="37783"/>
<dbReference type="EnsemblMetazoa" id="FBtr0072128">
    <property type="protein sequence ID" value="FBpp0072037"/>
    <property type="gene ID" value="FBgn0034919"/>
</dbReference>
<dbReference type="GeneID" id="37783"/>
<dbReference type="KEGG" id="dme:Dmel_CG5569"/>
<dbReference type="UCSC" id="CG5569-RA">
    <property type="organism name" value="d. melanogaster"/>
</dbReference>
<dbReference type="AGR" id="FB:FBgn0034919"/>
<dbReference type="FlyBase" id="FBgn0034919">
    <property type="gene designation" value="NdufAF3"/>
</dbReference>
<dbReference type="VEuPathDB" id="VectorBase:FBgn0034919"/>
<dbReference type="eggNOG" id="KOG3363">
    <property type="taxonomic scope" value="Eukaryota"/>
</dbReference>
<dbReference type="GeneTree" id="ENSGT00390000018312"/>
<dbReference type="HOGENOM" id="CLU_074390_3_2_1"/>
<dbReference type="InParanoid" id="Q9W1H9"/>
<dbReference type="OMA" id="FSKAYDH"/>
<dbReference type="OrthoDB" id="20681at2759"/>
<dbReference type="Reactome" id="R-DME-6799198">
    <property type="pathway name" value="Complex I biogenesis"/>
</dbReference>
<dbReference type="BioGRID-ORCS" id="37783">
    <property type="hits" value="0 hits in 1 CRISPR screen"/>
</dbReference>
<dbReference type="Proteomes" id="UP000000803">
    <property type="component" value="Chromosome 2R"/>
</dbReference>
<dbReference type="Bgee" id="FBgn0034919">
    <property type="expression patterns" value="Expressed in adult middle midgut class II enteroendocrine cell in adult midgut (Drosophila) and 110 other cell types or tissues"/>
</dbReference>
<dbReference type="GO" id="GO:0005743">
    <property type="term" value="C:mitochondrial inner membrane"/>
    <property type="evidence" value="ECO:0000318"/>
    <property type="project" value="GO_Central"/>
</dbReference>
<dbReference type="GO" id="GO:0005739">
    <property type="term" value="C:mitochondrion"/>
    <property type="evidence" value="ECO:0000314"/>
    <property type="project" value="FlyBase"/>
</dbReference>
<dbReference type="GO" id="GO:0032981">
    <property type="term" value="P:mitochondrial respiratory chain complex I assembly"/>
    <property type="evidence" value="ECO:0000315"/>
    <property type="project" value="FlyBase"/>
</dbReference>
<dbReference type="CDD" id="cd05125">
    <property type="entry name" value="Mth938_2P1-like"/>
    <property type="match status" value="1"/>
</dbReference>
<dbReference type="FunFam" id="3.40.1230.10:FF:000004">
    <property type="entry name" value="Blast:NADH dehydrogenase"/>
    <property type="match status" value="1"/>
</dbReference>
<dbReference type="Gene3D" id="3.40.1230.10">
    <property type="entry name" value="MTH938-like"/>
    <property type="match status" value="1"/>
</dbReference>
<dbReference type="InterPro" id="IPR036748">
    <property type="entry name" value="MTH938-like_sf"/>
</dbReference>
<dbReference type="InterPro" id="IPR034095">
    <property type="entry name" value="NDUF3"/>
</dbReference>
<dbReference type="InterPro" id="IPR007523">
    <property type="entry name" value="NDUFAF3/AAMDC"/>
</dbReference>
<dbReference type="PANTHER" id="PTHR21192:SF2">
    <property type="entry name" value="NADH DEHYDROGENASE [UBIQUINONE] 1 ALPHA SUBCOMPLEX ASSEMBLY FACTOR 3"/>
    <property type="match status" value="1"/>
</dbReference>
<dbReference type="PANTHER" id="PTHR21192">
    <property type="entry name" value="NUCLEAR PROTEIN E3-3"/>
    <property type="match status" value="1"/>
</dbReference>
<dbReference type="Pfam" id="PF04430">
    <property type="entry name" value="DUF498"/>
    <property type="match status" value="1"/>
</dbReference>
<dbReference type="SUPFAM" id="SSF64076">
    <property type="entry name" value="MTH938-like"/>
    <property type="match status" value="1"/>
</dbReference>
<comment type="function">
    <text evidence="2">Involved in the assembly of mitochondrial NADH:ubiquinone oxidoreductase complex (complex I) (PubMed:34386730). Together with NdufAF4, involved in biogenesis of complex 1 modules N, Q and P-peripheral, but not the P-distal module (PubMed:34386730). Required for recruitment of the complex I assembly factor Timmdc1 to complex 1 assembly intermediates (PubMed:34386730).</text>
</comment>
<comment type="subunit">
    <text evidence="2">Together with NdufAF4 associates with mitochondrial complex I assembly intermediates during its biogenesis.</text>
</comment>
<comment type="subcellular location">
    <subcellularLocation>
        <location evidence="1">Mitochondrion</location>
    </subcellularLocation>
</comment>
<comment type="disruption phenotype">
    <text evidence="2">RNAi-mediated knockdown in thoracic muscles is lethal.</text>
</comment>
<comment type="similarity">
    <text evidence="4">Belongs to the NDUFAF3 family.</text>
</comment>
<accession>Q9W1H9</accession>
<feature type="transit peptide" description="Mitochondrion" evidence="1">
    <location>
        <begin position="1"/>
        <end position="93"/>
    </location>
</feature>
<feature type="chain" id="PRO_0000461815" description="NADH dehydrogenase [ubiquinone] 1 alpha subcomplex assembly factor 3" evidence="1">
    <location>
        <begin position="94"/>
        <end position="196"/>
    </location>
</feature>
<sequence length="196" mass="22197">MIARTLRTVGRQGRNLLLPRITACRPLHAIPANFSKAYDHDGKTKVTIFNTETDLGLMVTGYSQYGFRLNNDMVLIGPISVFPRSVLSWNVNSFEDINEDSLSLFPTLEPKIDVLIIGIGDQAPPPALSKRIIEFMKKYKINVEILRTEQACATFNFLNAENRMVACALIPPLHLSYNENDILQAKLRKKELYETE</sequence>
<gene>
    <name evidence="3 6" type="primary">NdufAF3</name>
    <name evidence="6" type="ORF">CG5569</name>
</gene>